<dbReference type="EC" id="6.1.1.20" evidence="1"/>
<dbReference type="EMBL" id="CP000061">
    <property type="protein sequence ID" value="ABC65250.1"/>
    <property type="molecule type" value="Genomic_DNA"/>
</dbReference>
<dbReference type="RefSeq" id="WP_011412416.1">
    <property type="nucleotide sequence ID" value="NC_007716.1"/>
</dbReference>
<dbReference type="SMR" id="Q2NJZ3"/>
<dbReference type="STRING" id="322098.AYWB_133"/>
<dbReference type="KEGG" id="ayw:AYWB_133"/>
<dbReference type="eggNOG" id="COG0016">
    <property type="taxonomic scope" value="Bacteria"/>
</dbReference>
<dbReference type="HOGENOM" id="CLU_025086_0_1_14"/>
<dbReference type="OrthoDB" id="9800719at2"/>
<dbReference type="PhylomeDB" id="Q2NJZ3"/>
<dbReference type="Proteomes" id="UP000001934">
    <property type="component" value="Chromosome"/>
</dbReference>
<dbReference type="GO" id="GO:0005737">
    <property type="term" value="C:cytoplasm"/>
    <property type="evidence" value="ECO:0007669"/>
    <property type="project" value="UniProtKB-SubCell"/>
</dbReference>
<dbReference type="GO" id="GO:0005524">
    <property type="term" value="F:ATP binding"/>
    <property type="evidence" value="ECO:0007669"/>
    <property type="project" value="UniProtKB-UniRule"/>
</dbReference>
<dbReference type="GO" id="GO:0000287">
    <property type="term" value="F:magnesium ion binding"/>
    <property type="evidence" value="ECO:0007669"/>
    <property type="project" value="UniProtKB-UniRule"/>
</dbReference>
<dbReference type="GO" id="GO:0004826">
    <property type="term" value="F:phenylalanine-tRNA ligase activity"/>
    <property type="evidence" value="ECO:0007669"/>
    <property type="project" value="UniProtKB-UniRule"/>
</dbReference>
<dbReference type="GO" id="GO:0000049">
    <property type="term" value="F:tRNA binding"/>
    <property type="evidence" value="ECO:0007669"/>
    <property type="project" value="InterPro"/>
</dbReference>
<dbReference type="GO" id="GO:0006432">
    <property type="term" value="P:phenylalanyl-tRNA aminoacylation"/>
    <property type="evidence" value="ECO:0007669"/>
    <property type="project" value="UniProtKB-UniRule"/>
</dbReference>
<dbReference type="CDD" id="cd00496">
    <property type="entry name" value="PheRS_alpha_core"/>
    <property type="match status" value="1"/>
</dbReference>
<dbReference type="Gene3D" id="3.30.930.10">
    <property type="entry name" value="Bira Bifunctional Protein, Domain 2"/>
    <property type="match status" value="1"/>
</dbReference>
<dbReference type="HAMAP" id="MF_00281">
    <property type="entry name" value="Phe_tRNA_synth_alpha1"/>
    <property type="match status" value="1"/>
</dbReference>
<dbReference type="InterPro" id="IPR006195">
    <property type="entry name" value="aa-tRNA-synth_II"/>
</dbReference>
<dbReference type="InterPro" id="IPR045864">
    <property type="entry name" value="aa-tRNA-synth_II/BPL/LPL"/>
</dbReference>
<dbReference type="InterPro" id="IPR004529">
    <property type="entry name" value="Phe-tRNA-synth_IIc_asu"/>
</dbReference>
<dbReference type="InterPro" id="IPR004188">
    <property type="entry name" value="Phe-tRNA_ligase_II_N"/>
</dbReference>
<dbReference type="InterPro" id="IPR022911">
    <property type="entry name" value="Phe_tRNA_ligase_alpha1_bac"/>
</dbReference>
<dbReference type="InterPro" id="IPR002319">
    <property type="entry name" value="Phenylalanyl-tRNA_Synthase"/>
</dbReference>
<dbReference type="InterPro" id="IPR010978">
    <property type="entry name" value="tRNA-bd_arm"/>
</dbReference>
<dbReference type="NCBIfam" id="TIGR00468">
    <property type="entry name" value="pheS"/>
    <property type="match status" value="1"/>
</dbReference>
<dbReference type="PANTHER" id="PTHR11538:SF41">
    <property type="entry name" value="PHENYLALANINE--TRNA LIGASE, MITOCHONDRIAL"/>
    <property type="match status" value="1"/>
</dbReference>
<dbReference type="PANTHER" id="PTHR11538">
    <property type="entry name" value="PHENYLALANYL-TRNA SYNTHETASE"/>
    <property type="match status" value="1"/>
</dbReference>
<dbReference type="Pfam" id="PF02912">
    <property type="entry name" value="Phe_tRNA-synt_N"/>
    <property type="match status" value="1"/>
</dbReference>
<dbReference type="Pfam" id="PF01409">
    <property type="entry name" value="tRNA-synt_2d"/>
    <property type="match status" value="1"/>
</dbReference>
<dbReference type="SUPFAM" id="SSF55681">
    <property type="entry name" value="Class II aaRS and biotin synthetases"/>
    <property type="match status" value="1"/>
</dbReference>
<dbReference type="SUPFAM" id="SSF46589">
    <property type="entry name" value="tRNA-binding arm"/>
    <property type="match status" value="1"/>
</dbReference>
<dbReference type="PROSITE" id="PS50862">
    <property type="entry name" value="AA_TRNA_LIGASE_II"/>
    <property type="match status" value="1"/>
</dbReference>
<sequence length="343" mass="39875">MQTKIKKLIAQFHTSLQKNKYDLDKLMILDKEFLGKKGILFELTQELKNLPHAQKSVAGKLINFLKQEIIFTLQKEKETLKRNQLNAKILQEEIDPTLPAFNFCQGSTHPLNQIIEKIEDLFLSLGYEIKEGNEIETLFYNFEMLNMGKGHPAREMQDSFYIDSQKLLRTHTSNIQVKEMKARQGKPLKIISSGKVYRKDDDDATHSHQFMQLEGLVIDKNINFSVLKETLLLITKELFGNSQEIHLRPSYFPFTEPSIEVDLVITKKDGTKEYLEILGAGLVHPQVLKNANYDPEKYQGFAFGIGIERIAMIKYQIENIRYFYANDIRFLKQFARNADNENY</sequence>
<comment type="catalytic activity">
    <reaction evidence="1">
        <text>tRNA(Phe) + L-phenylalanine + ATP = L-phenylalanyl-tRNA(Phe) + AMP + diphosphate + H(+)</text>
        <dbReference type="Rhea" id="RHEA:19413"/>
        <dbReference type="Rhea" id="RHEA-COMP:9668"/>
        <dbReference type="Rhea" id="RHEA-COMP:9699"/>
        <dbReference type="ChEBI" id="CHEBI:15378"/>
        <dbReference type="ChEBI" id="CHEBI:30616"/>
        <dbReference type="ChEBI" id="CHEBI:33019"/>
        <dbReference type="ChEBI" id="CHEBI:58095"/>
        <dbReference type="ChEBI" id="CHEBI:78442"/>
        <dbReference type="ChEBI" id="CHEBI:78531"/>
        <dbReference type="ChEBI" id="CHEBI:456215"/>
        <dbReference type="EC" id="6.1.1.20"/>
    </reaction>
</comment>
<comment type="cofactor">
    <cofactor evidence="1">
        <name>Mg(2+)</name>
        <dbReference type="ChEBI" id="CHEBI:18420"/>
    </cofactor>
    <text evidence="1">Binds 2 magnesium ions per tetramer.</text>
</comment>
<comment type="subunit">
    <text evidence="1">Tetramer of two alpha and two beta subunits.</text>
</comment>
<comment type="subcellular location">
    <subcellularLocation>
        <location evidence="1">Cytoplasm</location>
    </subcellularLocation>
</comment>
<comment type="similarity">
    <text evidence="1">Belongs to the class-II aminoacyl-tRNA synthetase family. Phe-tRNA synthetase alpha subunit type 1 subfamily.</text>
</comment>
<gene>
    <name evidence="1" type="primary">pheS</name>
    <name type="ordered locus">AYWB_133</name>
</gene>
<evidence type="ECO:0000255" key="1">
    <source>
        <dbReference type="HAMAP-Rule" id="MF_00281"/>
    </source>
</evidence>
<protein>
    <recommendedName>
        <fullName evidence="1">Phenylalanine--tRNA ligase alpha subunit</fullName>
        <ecNumber evidence="1">6.1.1.20</ecNumber>
    </recommendedName>
    <alternativeName>
        <fullName evidence="1">Phenylalanyl-tRNA synthetase alpha subunit</fullName>
        <shortName evidence="1">PheRS</shortName>
    </alternativeName>
</protein>
<accession>Q2NJZ3</accession>
<reference key="1">
    <citation type="journal article" date="2006" name="J. Bacteriol.">
        <title>Living with genome instability: the adaptation of phytoplasmas to diverse environments of their insect and plant hosts.</title>
        <authorList>
            <person name="Bai X."/>
            <person name="Zhang J."/>
            <person name="Ewing A."/>
            <person name="Miller S.A."/>
            <person name="Jancso Radek A."/>
            <person name="Shevchenko D.V."/>
            <person name="Tsukerman K."/>
            <person name="Walunas T."/>
            <person name="Lapidus A."/>
            <person name="Campbell J.W."/>
            <person name="Hogenhout S.A."/>
        </authorList>
    </citation>
    <scope>NUCLEOTIDE SEQUENCE [LARGE SCALE GENOMIC DNA]</scope>
    <source>
        <strain>AYWB</strain>
    </source>
</reference>
<keyword id="KW-0030">Aminoacyl-tRNA synthetase</keyword>
<keyword id="KW-0067">ATP-binding</keyword>
<keyword id="KW-0963">Cytoplasm</keyword>
<keyword id="KW-0436">Ligase</keyword>
<keyword id="KW-0460">Magnesium</keyword>
<keyword id="KW-0479">Metal-binding</keyword>
<keyword id="KW-0547">Nucleotide-binding</keyword>
<keyword id="KW-0648">Protein biosynthesis</keyword>
<name>SYFA_AYWBP</name>
<feature type="chain" id="PRO_1000006797" description="Phenylalanine--tRNA ligase alpha subunit">
    <location>
        <begin position="1"/>
        <end position="343"/>
    </location>
</feature>
<feature type="binding site" evidence="1">
    <location>
        <position position="256"/>
    </location>
    <ligand>
        <name>Mg(2+)</name>
        <dbReference type="ChEBI" id="CHEBI:18420"/>
        <note>shared with beta subunit</note>
    </ligand>
</feature>
<organism>
    <name type="scientific">Aster yellows witches'-broom phytoplasma (strain AYWB)</name>
    <dbReference type="NCBI Taxonomy" id="322098"/>
    <lineage>
        <taxon>Bacteria</taxon>
        <taxon>Bacillati</taxon>
        <taxon>Mycoplasmatota</taxon>
        <taxon>Mollicutes</taxon>
        <taxon>Acholeplasmatales</taxon>
        <taxon>Acholeplasmataceae</taxon>
        <taxon>Candidatus Phytoplasma</taxon>
        <taxon>16SrI (Aster yellows group)</taxon>
    </lineage>
</organism>
<proteinExistence type="inferred from homology"/>